<keyword id="KW-0445">Lipid transport</keyword>
<keyword id="KW-0446">Lipid-binding</keyword>
<keyword id="KW-0813">Transport</keyword>
<proteinExistence type="inferred from homology"/>
<comment type="miscellaneous">
    <text evidence="1">The C.albicans mating-type-like (MTL) locus contains, in addition to the genes for the regulatory proteins (MTLA1, MTLA2, MTLALPHA1 and MTLALPHA2), a and alpha idiomorphs of a phosphatidylinositol kinase (PIKA and PIKALPHA), a poly(A) polymerase (PAPA and PAPALPHA) and an oxysterol binding protein-like protein (OBPA and OBPALPHA). OBPALPHA is not represented in the genomic sequence of strain SC5314 because that haploid assembly includes the mating type a allele of this locus.</text>
</comment>
<comment type="similarity">
    <text evidence="1">Belongs to the OSBP family.</text>
</comment>
<gene>
    <name type="primary">OBPALPHA</name>
    <name evidence="2" type="ordered locus">C5_01775C_B</name>
    <name type="ORF">CaO19.10709/10710</name>
</gene>
<feature type="chain" id="PRO_0000100384" description="Oxysterol-binding protein-like protein OBPalpha">
    <location>
        <begin position="1"/>
        <end position="429"/>
    </location>
</feature>
<evidence type="ECO:0000305" key="1"/>
<evidence type="ECO:0000312" key="2">
    <source>
        <dbReference type="CGD" id="CAL0000202034"/>
    </source>
</evidence>
<protein>
    <recommendedName>
        <fullName>Oxysterol-binding protein-like protein OBPalpha</fullName>
    </recommendedName>
</protein>
<dbReference type="EMBL" id="AF167163">
    <property type="protein sequence ID" value="AAD51409.1"/>
    <property type="molecule type" value="Genomic_DNA"/>
</dbReference>
<dbReference type="SMR" id="Q9UW21"/>
<dbReference type="CGD" id="CAL0000202034">
    <property type="gene designation" value="OBPALPHA"/>
</dbReference>
<dbReference type="eggNOG" id="KOG2210">
    <property type="taxonomic scope" value="Eukaryota"/>
</dbReference>
<dbReference type="HOGENOM" id="CLU_1927311_0_0_1"/>
<dbReference type="OMA" id="VHTHKKD"/>
<dbReference type="GO" id="GO:0008289">
    <property type="term" value="F:lipid binding"/>
    <property type="evidence" value="ECO:0007669"/>
    <property type="project" value="UniProtKB-KW"/>
</dbReference>
<dbReference type="GO" id="GO:0006869">
    <property type="term" value="P:lipid transport"/>
    <property type="evidence" value="ECO:0007669"/>
    <property type="project" value="UniProtKB-KW"/>
</dbReference>
<dbReference type="GO" id="GO:0044011">
    <property type="term" value="P:single-species biofilm formation on inanimate substrate"/>
    <property type="evidence" value="ECO:0000315"/>
    <property type="project" value="CGD"/>
</dbReference>
<dbReference type="FunFam" id="3.30.70.3490:FF:000014">
    <property type="entry name" value="OSH7p Oxysterol-binding protein"/>
    <property type="match status" value="1"/>
</dbReference>
<dbReference type="FunFam" id="2.40.160.120:FF:000007">
    <property type="entry name" value="Oxysterol binding protein"/>
    <property type="match status" value="1"/>
</dbReference>
<dbReference type="FunFam" id="1.10.287.2720:FF:000001">
    <property type="entry name" value="Oxysterol-binding OBPalpha"/>
    <property type="match status" value="1"/>
</dbReference>
<dbReference type="Gene3D" id="1.10.287.2720">
    <property type="match status" value="1"/>
</dbReference>
<dbReference type="Gene3D" id="2.40.160.120">
    <property type="match status" value="1"/>
</dbReference>
<dbReference type="Gene3D" id="3.30.70.3490">
    <property type="match status" value="1"/>
</dbReference>
<dbReference type="InterPro" id="IPR037239">
    <property type="entry name" value="OSBP_sf"/>
</dbReference>
<dbReference type="InterPro" id="IPR000648">
    <property type="entry name" value="Oxysterol-bd"/>
</dbReference>
<dbReference type="InterPro" id="IPR018494">
    <property type="entry name" value="Oxysterol-bd_CS"/>
</dbReference>
<dbReference type="PANTHER" id="PTHR10972:SF102">
    <property type="entry name" value="OXYSTEROL-BINDING PROTEIN"/>
    <property type="match status" value="1"/>
</dbReference>
<dbReference type="PANTHER" id="PTHR10972">
    <property type="entry name" value="OXYSTEROL-BINDING PROTEIN-RELATED"/>
    <property type="match status" value="1"/>
</dbReference>
<dbReference type="Pfam" id="PF01237">
    <property type="entry name" value="Oxysterol_BP"/>
    <property type="match status" value="1"/>
</dbReference>
<dbReference type="SUPFAM" id="SSF144000">
    <property type="entry name" value="Oxysterol-binding protein-like"/>
    <property type="match status" value="1"/>
</dbReference>
<dbReference type="PROSITE" id="PS01013">
    <property type="entry name" value="OSBP"/>
    <property type="match status" value="1"/>
</dbReference>
<sequence length="429" mass="49741">MGLTAKLDKLKLKTTSEDIEDDSGHAKPDNSDDIDEVDSEYQNILLSIIAQLRPGMDLSKITLPTFILEKKSMLERITNFFQIPKLLIDSNSIEDPLDRFIGVLRWYLASWHISPKAVKKPLNPVLGEVFTCYWDELPNNKSAYYLSEQISHHPPKSSYFYIMPEEKIRVDGVVIPKSRFLGNSSAAIMEGCGYVTLGKWDNEVYVMNQPNVYVRGILFGKMRTELGDHMYVKCERNGLEANIEFKTKGFIYGTYDAIEGIIKDSETQKELFQISGKWNEVMYIKNIKTGKKEVLYDTRGSKTLKPKVRPLEEQWDFESRKLWKPTIAGLAKRNHELATEEKSKVENEQRIKAKKRLEDGVEFHPKFFREVNENDNGVKNLEYVIYKKFDLKEDPEVLRERLFTVAPIVPGQKFDEKFHYPAFKKPESN</sequence>
<accession>Q9UW21</accession>
<accession>Q59YW8</accession>
<accession>Q59YW9</accession>
<organism>
    <name type="scientific">Candida albicans (strain SC5314 / ATCC MYA-2876)</name>
    <name type="common">Yeast</name>
    <dbReference type="NCBI Taxonomy" id="237561"/>
    <lineage>
        <taxon>Eukaryota</taxon>
        <taxon>Fungi</taxon>
        <taxon>Dikarya</taxon>
        <taxon>Ascomycota</taxon>
        <taxon>Saccharomycotina</taxon>
        <taxon>Pichiomycetes</taxon>
        <taxon>Debaryomycetaceae</taxon>
        <taxon>Candida/Lodderomyces clade</taxon>
        <taxon>Candida</taxon>
    </lineage>
</organism>
<reference key="1">
    <citation type="journal article" date="1999" name="Science">
        <title>Identification of a mating type-like locus in the asexual pathogenic yeast Candida albicans.</title>
        <authorList>
            <person name="Hull C.M."/>
            <person name="Johnson A.D."/>
        </authorList>
    </citation>
    <scope>NUCLEOTIDE SEQUENCE [GENOMIC DNA]</scope>
    <source>
        <strain>SC5314 / ATCC MYA-2876</strain>
    </source>
</reference>
<name>OBPAL_CANAL</name>